<reference key="1">
    <citation type="journal article" date="2006" name="Genome Biol.">
        <title>The genome of Rhizobium leguminosarum has recognizable core and accessory components.</title>
        <authorList>
            <person name="Young J.P.W."/>
            <person name="Crossman L.C."/>
            <person name="Johnston A.W.B."/>
            <person name="Thomson N.R."/>
            <person name="Ghazoui Z.F."/>
            <person name="Hull K.H."/>
            <person name="Wexler M."/>
            <person name="Curson A.R.J."/>
            <person name="Todd J.D."/>
            <person name="Poole P.S."/>
            <person name="Mauchline T.H."/>
            <person name="East A.K."/>
            <person name="Quail M.A."/>
            <person name="Churcher C."/>
            <person name="Arrowsmith C."/>
            <person name="Cherevach I."/>
            <person name="Chillingworth T."/>
            <person name="Clarke K."/>
            <person name="Cronin A."/>
            <person name="Davis P."/>
            <person name="Fraser A."/>
            <person name="Hance Z."/>
            <person name="Hauser H."/>
            <person name="Jagels K."/>
            <person name="Moule S."/>
            <person name="Mungall K."/>
            <person name="Norbertczak H."/>
            <person name="Rabbinowitsch E."/>
            <person name="Sanders M."/>
            <person name="Simmonds M."/>
            <person name="Whitehead S."/>
            <person name="Parkhill J."/>
        </authorList>
    </citation>
    <scope>NUCLEOTIDE SEQUENCE [LARGE SCALE GENOMIC DNA]</scope>
    <source>
        <strain>DSM 114642 / LMG 32736 / 3841</strain>
    </source>
</reference>
<accession>Q1MIN0</accession>
<sequence length="268" mass="29825">MMLENKAFEPRPAHSAPTVDKMALTGVNFYYGDAHAIRDVTLSFPERQVSALIGPSGCGKSTLLRILNRIYMLYPKMRATGSVTLDGQNILDPGYSMNELRARVGMVFQKPVPFPMSIYDNIAYGIRHHERISKAEMDVRVEQALRSAALWDEVKDKLKGSGLGLSGGQQQRLCIARAVALRPEVLLLDEPTSALDPISTAKVEELVARLKTDFTIVIVTHNMQQASRISDNTAFMYLGELVEYGPTAEIFQSPKVKRTEDYITGRYG</sequence>
<comment type="function">
    <text evidence="1">Part of the ABC transporter complex PstSACB involved in phosphate import. Responsible for energy coupling to the transport system.</text>
</comment>
<comment type="catalytic activity">
    <reaction evidence="1">
        <text>phosphate(out) + ATP + H2O = ADP + 2 phosphate(in) + H(+)</text>
        <dbReference type="Rhea" id="RHEA:24440"/>
        <dbReference type="ChEBI" id="CHEBI:15377"/>
        <dbReference type="ChEBI" id="CHEBI:15378"/>
        <dbReference type="ChEBI" id="CHEBI:30616"/>
        <dbReference type="ChEBI" id="CHEBI:43474"/>
        <dbReference type="ChEBI" id="CHEBI:456216"/>
        <dbReference type="EC" id="7.3.2.1"/>
    </reaction>
</comment>
<comment type="subunit">
    <text evidence="1">The complex is composed of two ATP-binding proteins (PstB), two transmembrane proteins (PstC and PstA) and a solute-binding protein (PstS).</text>
</comment>
<comment type="subcellular location">
    <subcellularLocation>
        <location evidence="1">Cell inner membrane</location>
        <topology evidence="1">Peripheral membrane protein</topology>
    </subcellularLocation>
</comment>
<comment type="similarity">
    <text evidence="1">Belongs to the ABC transporter superfamily. Phosphate importer (TC 3.A.1.7) family.</text>
</comment>
<gene>
    <name evidence="1" type="primary">pstB2</name>
    <name type="ordered locus">RL1685</name>
</gene>
<feature type="chain" id="PRO_0000272509" description="Phosphate import ATP-binding protein PstB 2">
    <location>
        <begin position="1"/>
        <end position="268"/>
    </location>
</feature>
<feature type="domain" description="ABC transporter" evidence="1">
    <location>
        <begin position="22"/>
        <end position="263"/>
    </location>
</feature>
<feature type="binding site" evidence="1">
    <location>
        <begin position="54"/>
        <end position="61"/>
    </location>
    <ligand>
        <name>ATP</name>
        <dbReference type="ChEBI" id="CHEBI:30616"/>
    </ligand>
</feature>
<proteinExistence type="inferred from homology"/>
<keyword id="KW-0067">ATP-binding</keyword>
<keyword id="KW-0997">Cell inner membrane</keyword>
<keyword id="KW-1003">Cell membrane</keyword>
<keyword id="KW-0472">Membrane</keyword>
<keyword id="KW-0547">Nucleotide-binding</keyword>
<keyword id="KW-0592">Phosphate transport</keyword>
<keyword id="KW-1278">Translocase</keyword>
<keyword id="KW-0813">Transport</keyword>
<dbReference type="EC" id="7.3.2.1" evidence="1"/>
<dbReference type="EMBL" id="AM236080">
    <property type="protein sequence ID" value="CAK07180.1"/>
    <property type="molecule type" value="Genomic_DNA"/>
</dbReference>
<dbReference type="SMR" id="Q1MIN0"/>
<dbReference type="EnsemblBacteria" id="CAK07180">
    <property type="protein sequence ID" value="CAK07180"/>
    <property type="gene ID" value="RL1685"/>
</dbReference>
<dbReference type="KEGG" id="rle:RL1685"/>
<dbReference type="eggNOG" id="COG1117">
    <property type="taxonomic scope" value="Bacteria"/>
</dbReference>
<dbReference type="HOGENOM" id="CLU_000604_1_22_5"/>
<dbReference type="Proteomes" id="UP000006575">
    <property type="component" value="Chromosome"/>
</dbReference>
<dbReference type="GO" id="GO:0005886">
    <property type="term" value="C:plasma membrane"/>
    <property type="evidence" value="ECO:0007669"/>
    <property type="project" value="UniProtKB-SubCell"/>
</dbReference>
<dbReference type="GO" id="GO:0005524">
    <property type="term" value="F:ATP binding"/>
    <property type="evidence" value="ECO:0007669"/>
    <property type="project" value="UniProtKB-KW"/>
</dbReference>
<dbReference type="GO" id="GO:0016887">
    <property type="term" value="F:ATP hydrolysis activity"/>
    <property type="evidence" value="ECO:0007669"/>
    <property type="project" value="InterPro"/>
</dbReference>
<dbReference type="GO" id="GO:0015415">
    <property type="term" value="F:ATPase-coupled phosphate ion transmembrane transporter activity"/>
    <property type="evidence" value="ECO:0007669"/>
    <property type="project" value="UniProtKB-EC"/>
</dbReference>
<dbReference type="GO" id="GO:0035435">
    <property type="term" value="P:phosphate ion transmembrane transport"/>
    <property type="evidence" value="ECO:0007669"/>
    <property type="project" value="InterPro"/>
</dbReference>
<dbReference type="CDD" id="cd03260">
    <property type="entry name" value="ABC_PstB_phosphate_transporter"/>
    <property type="match status" value="1"/>
</dbReference>
<dbReference type="Gene3D" id="3.40.50.300">
    <property type="entry name" value="P-loop containing nucleotide triphosphate hydrolases"/>
    <property type="match status" value="1"/>
</dbReference>
<dbReference type="InterPro" id="IPR003593">
    <property type="entry name" value="AAA+_ATPase"/>
</dbReference>
<dbReference type="InterPro" id="IPR003439">
    <property type="entry name" value="ABC_transporter-like_ATP-bd"/>
</dbReference>
<dbReference type="InterPro" id="IPR017871">
    <property type="entry name" value="ABC_transporter-like_CS"/>
</dbReference>
<dbReference type="InterPro" id="IPR027417">
    <property type="entry name" value="P-loop_NTPase"/>
</dbReference>
<dbReference type="InterPro" id="IPR005670">
    <property type="entry name" value="PstB-like"/>
</dbReference>
<dbReference type="NCBIfam" id="TIGR00972">
    <property type="entry name" value="3a0107s01c2"/>
    <property type="match status" value="1"/>
</dbReference>
<dbReference type="PANTHER" id="PTHR43423">
    <property type="entry name" value="ABC TRANSPORTER I FAMILY MEMBER 17"/>
    <property type="match status" value="1"/>
</dbReference>
<dbReference type="PANTHER" id="PTHR43423:SF3">
    <property type="entry name" value="PHOSPHATE IMPORT ATP-BINDING PROTEIN PSTB"/>
    <property type="match status" value="1"/>
</dbReference>
<dbReference type="Pfam" id="PF00005">
    <property type="entry name" value="ABC_tran"/>
    <property type="match status" value="1"/>
</dbReference>
<dbReference type="SMART" id="SM00382">
    <property type="entry name" value="AAA"/>
    <property type="match status" value="1"/>
</dbReference>
<dbReference type="SUPFAM" id="SSF52540">
    <property type="entry name" value="P-loop containing nucleoside triphosphate hydrolases"/>
    <property type="match status" value="1"/>
</dbReference>
<dbReference type="PROSITE" id="PS00211">
    <property type="entry name" value="ABC_TRANSPORTER_1"/>
    <property type="match status" value="1"/>
</dbReference>
<dbReference type="PROSITE" id="PS50893">
    <property type="entry name" value="ABC_TRANSPORTER_2"/>
    <property type="match status" value="1"/>
</dbReference>
<dbReference type="PROSITE" id="PS51238">
    <property type="entry name" value="PSTB"/>
    <property type="match status" value="1"/>
</dbReference>
<organism>
    <name type="scientific">Rhizobium johnstonii (strain DSM 114642 / LMG 32736 / 3841)</name>
    <name type="common">Rhizobium leguminosarum bv. viciae</name>
    <dbReference type="NCBI Taxonomy" id="216596"/>
    <lineage>
        <taxon>Bacteria</taxon>
        <taxon>Pseudomonadati</taxon>
        <taxon>Pseudomonadota</taxon>
        <taxon>Alphaproteobacteria</taxon>
        <taxon>Hyphomicrobiales</taxon>
        <taxon>Rhizobiaceae</taxon>
        <taxon>Rhizobium/Agrobacterium group</taxon>
        <taxon>Rhizobium</taxon>
        <taxon>Rhizobium johnstonii</taxon>
    </lineage>
</organism>
<name>PSTB2_RHIJ3</name>
<evidence type="ECO:0000255" key="1">
    <source>
        <dbReference type="HAMAP-Rule" id="MF_01702"/>
    </source>
</evidence>
<protein>
    <recommendedName>
        <fullName evidence="1">Phosphate import ATP-binding protein PstB 2</fullName>
        <ecNumber evidence="1">7.3.2.1</ecNumber>
    </recommendedName>
    <alternativeName>
        <fullName evidence="1">ABC phosphate transporter 2</fullName>
    </alternativeName>
    <alternativeName>
        <fullName evidence="1">Phosphate-transporting ATPase 2</fullName>
    </alternativeName>
</protein>